<gene>
    <name evidence="1" type="primary">rpoC2</name>
    <name type="ordered locus">SYNW0615</name>
</gene>
<organism>
    <name type="scientific">Parasynechococcus marenigrum (strain WH8102)</name>
    <dbReference type="NCBI Taxonomy" id="84588"/>
    <lineage>
        <taxon>Bacteria</taxon>
        <taxon>Bacillati</taxon>
        <taxon>Cyanobacteriota</taxon>
        <taxon>Cyanophyceae</taxon>
        <taxon>Synechococcales</taxon>
        <taxon>Prochlorococcaceae</taxon>
        <taxon>Parasynechococcus</taxon>
        <taxon>Parasynechococcus marenigrum</taxon>
    </lineage>
</organism>
<proteinExistence type="inferred from homology"/>
<accession>Q7U8K2</accession>
<dbReference type="EC" id="2.7.7.6" evidence="1"/>
<dbReference type="EMBL" id="BX569690">
    <property type="protein sequence ID" value="CAE07130.1"/>
    <property type="molecule type" value="Genomic_DNA"/>
</dbReference>
<dbReference type="RefSeq" id="WP_011127482.1">
    <property type="nucleotide sequence ID" value="NC_005070.1"/>
</dbReference>
<dbReference type="SMR" id="Q7U8K2"/>
<dbReference type="STRING" id="84588.SYNW0615"/>
<dbReference type="KEGG" id="syw:SYNW0615"/>
<dbReference type="eggNOG" id="COG0086">
    <property type="taxonomic scope" value="Bacteria"/>
</dbReference>
<dbReference type="HOGENOM" id="CLU_000524_1_0_3"/>
<dbReference type="Proteomes" id="UP000001422">
    <property type="component" value="Chromosome"/>
</dbReference>
<dbReference type="GO" id="GO:0000428">
    <property type="term" value="C:DNA-directed RNA polymerase complex"/>
    <property type="evidence" value="ECO:0007669"/>
    <property type="project" value="UniProtKB-KW"/>
</dbReference>
<dbReference type="GO" id="GO:0003677">
    <property type="term" value="F:DNA binding"/>
    <property type="evidence" value="ECO:0007669"/>
    <property type="project" value="UniProtKB-UniRule"/>
</dbReference>
<dbReference type="GO" id="GO:0003899">
    <property type="term" value="F:DNA-directed RNA polymerase activity"/>
    <property type="evidence" value="ECO:0007669"/>
    <property type="project" value="UniProtKB-UniRule"/>
</dbReference>
<dbReference type="GO" id="GO:0008270">
    <property type="term" value="F:zinc ion binding"/>
    <property type="evidence" value="ECO:0007669"/>
    <property type="project" value="UniProtKB-UniRule"/>
</dbReference>
<dbReference type="GO" id="GO:0006351">
    <property type="term" value="P:DNA-templated transcription"/>
    <property type="evidence" value="ECO:0007669"/>
    <property type="project" value="UniProtKB-UniRule"/>
</dbReference>
<dbReference type="CDD" id="cd02655">
    <property type="entry name" value="RNAP_beta'_C"/>
    <property type="match status" value="1"/>
</dbReference>
<dbReference type="FunFam" id="1.10.150.390:FF:000002">
    <property type="entry name" value="DNA-directed RNA polymerase subunit beta"/>
    <property type="match status" value="1"/>
</dbReference>
<dbReference type="Gene3D" id="1.10.132.30">
    <property type="match status" value="1"/>
</dbReference>
<dbReference type="Gene3D" id="1.10.150.390">
    <property type="match status" value="1"/>
</dbReference>
<dbReference type="Gene3D" id="1.10.1790.20">
    <property type="match status" value="1"/>
</dbReference>
<dbReference type="Gene3D" id="2.40.50.100">
    <property type="match status" value="1"/>
</dbReference>
<dbReference type="Gene3D" id="1.10.274.100">
    <property type="entry name" value="RNA polymerase Rpb1, domain 3"/>
    <property type="match status" value="1"/>
</dbReference>
<dbReference type="HAMAP" id="MF_01324">
    <property type="entry name" value="RNApol_bact_RpoC2"/>
    <property type="match status" value="1"/>
</dbReference>
<dbReference type="InterPro" id="IPR012756">
    <property type="entry name" value="DNA-dir_RpoC2_beta_pp"/>
</dbReference>
<dbReference type="InterPro" id="IPR045867">
    <property type="entry name" value="DNA-dir_RpoC_beta_prime"/>
</dbReference>
<dbReference type="InterPro" id="IPR042102">
    <property type="entry name" value="RNA_pol_Rpb1_3_sf"/>
</dbReference>
<dbReference type="InterPro" id="IPR007083">
    <property type="entry name" value="RNA_pol_Rpb1_4"/>
</dbReference>
<dbReference type="InterPro" id="IPR007081">
    <property type="entry name" value="RNA_pol_Rpb1_5"/>
</dbReference>
<dbReference type="InterPro" id="IPR038120">
    <property type="entry name" value="Rpb1_funnel_sf"/>
</dbReference>
<dbReference type="NCBIfam" id="NF002724">
    <property type="entry name" value="PRK02597.1"/>
    <property type="match status" value="1"/>
</dbReference>
<dbReference type="NCBIfam" id="TIGR02388">
    <property type="entry name" value="rpoC2_cyan"/>
    <property type="match status" value="1"/>
</dbReference>
<dbReference type="PANTHER" id="PTHR19376">
    <property type="entry name" value="DNA-DIRECTED RNA POLYMERASE"/>
    <property type="match status" value="1"/>
</dbReference>
<dbReference type="Pfam" id="PF05000">
    <property type="entry name" value="RNA_pol_Rpb1_4"/>
    <property type="match status" value="1"/>
</dbReference>
<dbReference type="Pfam" id="PF04998">
    <property type="entry name" value="RNA_pol_Rpb1_5"/>
    <property type="match status" value="2"/>
</dbReference>
<dbReference type="SUPFAM" id="SSF64484">
    <property type="entry name" value="beta and beta-prime subunits of DNA dependent RNA-polymerase"/>
    <property type="match status" value="1"/>
</dbReference>
<comment type="function">
    <text evidence="1">DNA-dependent RNA polymerase catalyzes the transcription of DNA into RNA using the four ribonucleoside triphosphates as substrates.</text>
</comment>
<comment type="catalytic activity">
    <reaction evidence="1">
        <text>RNA(n) + a ribonucleoside 5'-triphosphate = RNA(n+1) + diphosphate</text>
        <dbReference type="Rhea" id="RHEA:21248"/>
        <dbReference type="Rhea" id="RHEA-COMP:14527"/>
        <dbReference type="Rhea" id="RHEA-COMP:17342"/>
        <dbReference type="ChEBI" id="CHEBI:33019"/>
        <dbReference type="ChEBI" id="CHEBI:61557"/>
        <dbReference type="ChEBI" id="CHEBI:140395"/>
        <dbReference type="EC" id="2.7.7.6"/>
    </reaction>
</comment>
<comment type="cofactor">
    <cofactor evidence="1">
        <name>Zn(2+)</name>
        <dbReference type="ChEBI" id="CHEBI:29105"/>
    </cofactor>
    <text evidence="1">Binds 1 Zn(2+) ion per subunit.</text>
</comment>
<comment type="subunit">
    <text evidence="1">In cyanobacteria the RNAP catalytic core is composed of 2 alpha, 1 beta, 1 beta', 1 gamma and 1 omega subunit. When a sigma factor is associated with the core the holoenzyme is formed, which can initiate transcription.</text>
</comment>
<comment type="similarity">
    <text evidence="1">Belongs to the RNA polymerase beta' chain family. RpoC2 subfamily.</text>
</comment>
<evidence type="ECO:0000255" key="1">
    <source>
        <dbReference type="HAMAP-Rule" id="MF_01324"/>
    </source>
</evidence>
<evidence type="ECO:0000256" key="2">
    <source>
        <dbReference type="SAM" id="MobiDB-lite"/>
    </source>
</evidence>
<keyword id="KW-0240">DNA-directed RNA polymerase</keyword>
<keyword id="KW-0479">Metal-binding</keyword>
<keyword id="KW-0548">Nucleotidyltransferase</keyword>
<keyword id="KW-0804">Transcription</keyword>
<keyword id="KW-0808">Transferase</keyword>
<keyword id="KW-0862">Zinc</keyword>
<name>RPOC2_PARMW</name>
<sequence length="1364" mass="148443">MTSSSSKSNKSRKSSKAAKDTTPVHESASRPLSKTPPPFRNHIVDKRGLKQLVAWAYKNHGTAVTSSMADKLKDLGFRYATQAAVSISVNDLQVPEAKKALLGEAEEQITATEERYRLGEITEVERHTKVIDTWTETNERLVDAVKKNFNQNAPLNSVWMMANSGARGNMSQVRQLVGMRGLMANPQGEIIDLPIRTNFREGLTVTEYVISSYGARKGLVDTALRTADSGYLTRRLVDVAQDVIVREDDCGTTRHIVVEAEDGRFGNRLVGRLTASQVVSAVGEVLAERDTEIDPPLSKRIEKAGVTAVSVRSPLTCEANRSVCRKCYGWALAHNELVDLGEAVGIIAAQSIGEPGTQLTMRTFHTGGVSTAETGVVRSVVAGTIEFSAKARVRPYRTPHGVNAQQAEVDFNLSIKPVGKGKTQKIEITNGSLLFVENGQTIDADVTVAQIAAGAVKKSVEKATKDVICDLAGQVRYEEAIQPREVTDRQGNITLKAQRLGRMWVLAGDVYNLPPNAQPVVQGDTEVTEGQVLAEASQRSEYGGDVRLRDSIGDSREVQIVTTAMTLKDFKLLEESTHSGEIWNLEAKDGTRYRLNTIPGSKIGSGEVVAELADDRFRTGTGGLVKFAPGLAIKKARSAKNGYEVNKGGTLLWIPQETHEINKDISLLMITDGQWIEAGTEVVKDIFSQTAGVVTVTQKNDILREIIVRSGDFHLSSDSKALERFEGDGHMVNPGEEIAKGLSIQDMKYVQTVETPEGKGLLLRPVEEYTIPNEAQLPELSHVKQANGPHLGIKATQRLAFKDNELIKSVEGVELLKTQLILETFDTTPQMTVDVEKAPDKRAKTISRLRLVILESILVRRDTMSDSSHGSTHTELQVEDGISVKAGDVIATTQILCKQAGVAQLPEATEADPVRRLLVERPEDTTTLSTSGKPVVAVGQRIVDGELLAEGDPSSCCGEVEAVDSNSVTLRLGRPYMVSPDSVLHVRDGDLVQRGDGLALLVFERQKTGDIVQGLPRIEELLEARRPRESAVLCKKPGTVEIKQGDDDESLTVTVIEADDAIGEYPILLGRNVMVSDGQQVTAGELLTDGPINPHELLECFFEDLRSRKPLMDAAQEAIANLQHRLVTEVQNVYKSQGVSIDDKHIEVIVRQMTSKVRVEDAGDTTLLPGELIELRQVEDTNQAMAITGGAPAEFTPVLLGITKASLNTDSFISAASFQETTRVLTEAAIEGKSDWLRGLKENVIIGRLIPAGTGFSGFEEELQKEAGPHPDILSEDPAGYRRMQNLRPDYTVEMPPAASSTAVLDDPSDADLEATRTRHNIDPSASNFAAFARPDADNELKEEQVVDAEAVEGLQEEGLLSDD</sequence>
<feature type="chain" id="PRO_0000067909" description="DNA-directed RNA polymerase subunit beta'">
    <location>
        <begin position="1"/>
        <end position="1364"/>
    </location>
</feature>
<feature type="region of interest" description="Disordered" evidence="2">
    <location>
        <begin position="1"/>
        <end position="42"/>
    </location>
</feature>
<feature type="binding site" evidence="1">
    <location>
        <position position="250"/>
    </location>
    <ligand>
        <name>Zn(2+)</name>
        <dbReference type="ChEBI" id="CHEBI:29105"/>
    </ligand>
</feature>
<feature type="binding site" evidence="1">
    <location>
        <position position="317"/>
    </location>
    <ligand>
        <name>Zn(2+)</name>
        <dbReference type="ChEBI" id="CHEBI:29105"/>
    </ligand>
</feature>
<feature type="binding site" evidence="1">
    <location>
        <position position="324"/>
    </location>
    <ligand>
        <name>Zn(2+)</name>
        <dbReference type="ChEBI" id="CHEBI:29105"/>
    </ligand>
</feature>
<feature type="binding site" evidence="1">
    <location>
        <position position="327"/>
    </location>
    <ligand>
        <name>Zn(2+)</name>
        <dbReference type="ChEBI" id="CHEBI:29105"/>
    </ligand>
</feature>
<protein>
    <recommendedName>
        <fullName evidence="1">DNA-directed RNA polymerase subunit beta'</fullName>
        <shortName evidence="1">RNAP subunit beta'</shortName>
        <ecNumber evidence="1">2.7.7.6</ecNumber>
    </recommendedName>
    <alternativeName>
        <fullName evidence="1">RNA polymerase subunit beta'</fullName>
    </alternativeName>
    <alternativeName>
        <fullName evidence="1">Transcriptase subunit beta'</fullName>
    </alternativeName>
</protein>
<reference key="1">
    <citation type="journal article" date="2003" name="Nature">
        <title>The genome of a motile marine Synechococcus.</title>
        <authorList>
            <person name="Palenik B."/>
            <person name="Brahamsha B."/>
            <person name="Larimer F.W."/>
            <person name="Land M.L."/>
            <person name="Hauser L."/>
            <person name="Chain P."/>
            <person name="Lamerdin J.E."/>
            <person name="Regala W."/>
            <person name="Allen E.E."/>
            <person name="McCarren J."/>
            <person name="Paulsen I.T."/>
            <person name="Dufresne A."/>
            <person name="Partensky F."/>
            <person name="Webb E.A."/>
            <person name="Waterbury J."/>
        </authorList>
    </citation>
    <scope>NUCLEOTIDE SEQUENCE [LARGE SCALE GENOMIC DNA]</scope>
    <source>
        <strain>WH8102</strain>
    </source>
</reference>